<dbReference type="EMBL" id="CP000447">
    <property type="protein sequence ID" value="ABI72917.1"/>
    <property type="molecule type" value="Genomic_DNA"/>
</dbReference>
<dbReference type="RefSeq" id="WP_011638523.1">
    <property type="nucleotide sequence ID" value="NC_008345.1"/>
</dbReference>
<dbReference type="SMR" id="Q07YJ7"/>
<dbReference type="STRING" id="318167.Sfri_3080"/>
<dbReference type="KEGG" id="sfr:Sfri_3080"/>
<dbReference type="eggNOG" id="COG2967">
    <property type="taxonomic scope" value="Bacteria"/>
</dbReference>
<dbReference type="HOGENOM" id="CLU_128074_0_0_6"/>
<dbReference type="OrthoDB" id="9795226at2"/>
<dbReference type="Proteomes" id="UP000000684">
    <property type="component" value="Chromosome"/>
</dbReference>
<dbReference type="GO" id="GO:0070987">
    <property type="term" value="P:error-free translesion synthesis"/>
    <property type="evidence" value="ECO:0007669"/>
    <property type="project" value="TreeGrafter"/>
</dbReference>
<dbReference type="Gene3D" id="2.60.40.1470">
    <property type="entry name" value="ApaG domain"/>
    <property type="match status" value="1"/>
</dbReference>
<dbReference type="HAMAP" id="MF_00791">
    <property type="entry name" value="ApaG"/>
    <property type="match status" value="1"/>
</dbReference>
<dbReference type="InterPro" id="IPR007474">
    <property type="entry name" value="ApaG_domain"/>
</dbReference>
<dbReference type="InterPro" id="IPR036767">
    <property type="entry name" value="ApaG_sf"/>
</dbReference>
<dbReference type="InterPro" id="IPR023065">
    <property type="entry name" value="Uncharacterised_ApaG"/>
</dbReference>
<dbReference type="NCBIfam" id="NF003967">
    <property type="entry name" value="PRK05461.1"/>
    <property type="match status" value="1"/>
</dbReference>
<dbReference type="PANTHER" id="PTHR14289">
    <property type="entry name" value="F-BOX ONLY PROTEIN 3"/>
    <property type="match status" value="1"/>
</dbReference>
<dbReference type="PANTHER" id="PTHR14289:SF16">
    <property type="entry name" value="POLYMERASE DELTA-INTERACTING PROTEIN 2"/>
    <property type="match status" value="1"/>
</dbReference>
<dbReference type="Pfam" id="PF04379">
    <property type="entry name" value="DUF525"/>
    <property type="match status" value="1"/>
</dbReference>
<dbReference type="SUPFAM" id="SSF110069">
    <property type="entry name" value="ApaG-like"/>
    <property type="match status" value="1"/>
</dbReference>
<dbReference type="PROSITE" id="PS51087">
    <property type="entry name" value="APAG"/>
    <property type="match status" value="1"/>
</dbReference>
<keyword id="KW-1185">Reference proteome</keyword>
<name>APAG_SHEFN</name>
<accession>Q07YJ7</accession>
<gene>
    <name evidence="1" type="primary">apaG</name>
    <name type="ordered locus">Sfri_3080</name>
</gene>
<evidence type="ECO:0000255" key="1">
    <source>
        <dbReference type="HAMAP-Rule" id="MF_00791"/>
    </source>
</evidence>
<feature type="chain" id="PRO_1000083649" description="Protein ApaG">
    <location>
        <begin position="1"/>
        <end position="126"/>
    </location>
</feature>
<feature type="domain" description="ApaG" evidence="1">
    <location>
        <begin position="2"/>
        <end position="126"/>
    </location>
</feature>
<organism>
    <name type="scientific">Shewanella frigidimarina (strain NCIMB 400)</name>
    <dbReference type="NCBI Taxonomy" id="318167"/>
    <lineage>
        <taxon>Bacteria</taxon>
        <taxon>Pseudomonadati</taxon>
        <taxon>Pseudomonadota</taxon>
        <taxon>Gammaproteobacteria</taxon>
        <taxon>Alteromonadales</taxon>
        <taxon>Shewanellaceae</taxon>
        <taxon>Shewanella</taxon>
    </lineage>
</organism>
<reference key="1">
    <citation type="submission" date="2006-08" db="EMBL/GenBank/DDBJ databases">
        <title>Complete sequence of Shewanella frigidimarina NCIMB 400.</title>
        <authorList>
            <consortium name="US DOE Joint Genome Institute"/>
            <person name="Copeland A."/>
            <person name="Lucas S."/>
            <person name="Lapidus A."/>
            <person name="Barry K."/>
            <person name="Detter J.C."/>
            <person name="Glavina del Rio T."/>
            <person name="Hammon N."/>
            <person name="Israni S."/>
            <person name="Dalin E."/>
            <person name="Tice H."/>
            <person name="Pitluck S."/>
            <person name="Fredrickson J.K."/>
            <person name="Kolker E."/>
            <person name="McCuel L.A."/>
            <person name="DiChristina T."/>
            <person name="Nealson K.H."/>
            <person name="Newman D."/>
            <person name="Tiedje J.M."/>
            <person name="Zhou J."/>
            <person name="Romine M.F."/>
            <person name="Culley D.E."/>
            <person name="Serres M."/>
            <person name="Chertkov O."/>
            <person name="Brettin T."/>
            <person name="Bruce D."/>
            <person name="Han C."/>
            <person name="Tapia R."/>
            <person name="Gilna P."/>
            <person name="Schmutz J."/>
            <person name="Larimer F."/>
            <person name="Land M."/>
            <person name="Hauser L."/>
            <person name="Kyrpides N."/>
            <person name="Mikhailova N."/>
            <person name="Richardson P."/>
        </authorList>
    </citation>
    <scope>NUCLEOTIDE SEQUENCE [LARGE SCALE GENOMIC DNA]</scope>
    <source>
        <strain>NCIMB 400</strain>
    </source>
</reference>
<sequence>MSQVESPIKIKVDTQYLEQQSDVADNKYLFSYTITIINLGDNKVTLKDRHWIITDADGEQNEVKGPGVVGETPTIAPNTAYQYTSGTVMETPVGFMQGSYGMENHKGERFVATIPPFRLAVPGIFQ</sequence>
<proteinExistence type="inferred from homology"/>
<protein>
    <recommendedName>
        <fullName evidence="1">Protein ApaG</fullName>
    </recommendedName>
</protein>